<keyword id="KW-0030">Aminoacyl-tRNA synthetase</keyword>
<keyword id="KW-0067">ATP-binding</keyword>
<keyword id="KW-0963">Cytoplasm</keyword>
<keyword id="KW-0436">Ligase</keyword>
<keyword id="KW-0547">Nucleotide-binding</keyword>
<keyword id="KW-0648">Protein biosynthesis</keyword>
<sequence length="473" mass="52049">MSKPVITRFAPSPTGYLHIGGARTALFNWLYAKHCGGKMLLRIEDTDRERSTEAATAAILDGLTWLGLDWDGEAISQFERAPRHREVAEELVANGKAYYCYASPEELEEMREKARAEGRPPRYDGRWRDRDPSEAPAGVKPVIRIKAPRDGETVVHDAVQGDVRFPNKDLDDFIILRSDGTPTYMHAVVVDDHDMGVTHIIRGDDHLTNAARQTIIYNAMGWDVPQMSHIPLIHGADGAKLSKRHGALGVDAYRAMGYLPAALRNYLVRLGWSHGDDEIMSTEQMIEWFDVKDINKGAARFDFQKLEAINGLYMRSSDDQALFDALVAVLPEIEGGKELAEALDDKGRAQLLLAMPGLKERAKTLVELADGAKFIFASRPLALDEKAASLLNDEGRAVLKPVYPVLEAVGEWTAESLDAAIRAHAEAEGLKLGKIAQPLRAALTGRATSPGVFDVLVVLGREESLARIGDQIG</sequence>
<feature type="chain" id="PRO_0000367626" description="Glutamate--tRNA ligase 2">
    <location>
        <begin position="1"/>
        <end position="473"/>
    </location>
</feature>
<feature type="region of interest" description="Disordered" evidence="2">
    <location>
        <begin position="113"/>
        <end position="136"/>
    </location>
</feature>
<feature type="short sequence motif" description="'HIGH' region" evidence="1">
    <location>
        <begin position="11"/>
        <end position="21"/>
    </location>
</feature>
<feature type="short sequence motif" description="'KMSKS' region" evidence="1">
    <location>
        <begin position="240"/>
        <end position="244"/>
    </location>
</feature>
<feature type="compositionally biased region" description="Basic and acidic residues" evidence="2">
    <location>
        <begin position="113"/>
        <end position="133"/>
    </location>
</feature>
<feature type="binding site" evidence="1">
    <location>
        <position position="243"/>
    </location>
    <ligand>
        <name>ATP</name>
        <dbReference type="ChEBI" id="CHEBI:30616"/>
    </ligand>
</feature>
<protein>
    <recommendedName>
        <fullName evidence="1">Glutamate--tRNA ligase 2</fullName>
        <ecNumber evidence="1">6.1.1.17</ecNumber>
    </recommendedName>
    <alternativeName>
        <fullName evidence="1">Glutamyl-tRNA synthetase 2</fullName>
        <shortName evidence="1">GluRS 2</shortName>
    </alternativeName>
</protein>
<reference key="1">
    <citation type="journal article" date="2009" name="PLoS ONE">
        <title>Genome degradation in Brucella ovis corresponds with narrowing of its host range and tissue tropism.</title>
        <authorList>
            <person name="Tsolis R.M."/>
            <person name="Seshadri R."/>
            <person name="Santos R.L."/>
            <person name="Sangari F.J."/>
            <person name="Lobo J.M."/>
            <person name="de Jong M.F."/>
            <person name="Ren Q."/>
            <person name="Myers G."/>
            <person name="Brinkac L.M."/>
            <person name="Nelson W.C."/>
            <person name="Deboy R.T."/>
            <person name="Angiuoli S."/>
            <person name="Khouri H."/>
            <person name="Dimitrov G."/>
            <person name="Robinson J.R."/>
            <person name="Mulligan S."/>
            <person name="Walker R.L."/>
            <person name="Elzer P.E."/>
            <person name="Hassan K.A."/>
            <person name="Paulsen I.T."/>
        </authorList>
    </citation>
    <scope>NUCLEOTIDE SEQUENCE [LARGE SCALE GENOMIC DNA]</scope>
    <source>
        <strain>ATCC 25840 / 63/290 / NCTC 10512</strain>
    </source>
</reference>
<organism>
    <name type="scientific">Brucella ovis (strain ATCC 25840 / 63/290 / NCTC 10512)</name>
    <dbReference type="NCBI Taxonomy" id="444178"/>
    <lineage>
        <taxon>Bacteria</taxon>
        <taxon>Pseudomonadati</taxon>
        <taxon>Pseudomonadota</taxon>
        <taxon>Alphaproteobacteria</taxon>
        <taxon>Hyphomicrobiales</taxon>
        <taxon>Brucellaceae</taxon>
        <taxon>Brucella/Ochrobactrum group</taxon>
        <taxon>Brucella</taxon>
    </lineage>
</organism>
<gene>
    <name evidence="1" type="primary">gltX2</name>
    <name type="ordered locus">BOV_1105</name>
</gene>
<comment type="function">
    <text evidence="1">Catalyzes the attachment of glutamate to tRNA(Glu) in a two-step reaction: glutamate is first activated by ATP to form Glu-AMP and then transferred to the acceptor end of tRNA(Glu).</text>
</comment>
<comment type="catalytic activity">
    <reaction evidence="1">
        <text>tRNA(Glu) + L-glutamate + ATP = L-glutamyl-tRNA(Glu) + AMP + diphosphate</text>
        <dbReference type="Rhea" id="RHEA:23540"/>
        <dbReference type="Rhea" id="RHEA-COMP:9663"/>
        <dbReference type="Rhea" id="RHEA-COMP:9680"/>
        <dbReference type="ChEBI" id="CHEBI:29985"/>
        <dbReference type="ChEBI" id="CHEBI:30616"/>
        <dbReference type="ChEBI" id="CHEBI:33019"/>
        <dbReference type="ChEBI" id="CHEBI:78442"/>
        <dbReference type="ChEBI" id="CHEBI:78520"/>
        <dbReference type="ChEBI" id="CHEBI:456215"/>
        <dbReference type="EC" id="6.1.1.17"/>
    </reaction>
</comment>
<comment type="subunit">
    <text evidence="1">Monomer.</text>
</comment>
<comment type="subcellular location">
    <subcellularLocation>
        <location evidence="1">Cytoplasm</location>
    </subcellularLocation>
</comment>
<comment type="similarity">
    <text evidence="1">Belongs to the class-I aminoacyl-tRNA synthetase family. Glutamate--tRNA ligase type 1 subfamily.</text>
</comment>
<dbReference type="EC" id="6.1.1.17" evidence="1"/>
<dbReference type="EMBL" id="CP000708">
    <property type="protein sequence ID" value="ABQ61044.1"/>
    <property type="molecule type" value="Genomic_DNA"/>
</dbReference>
<dbReference type="SMR" id="A5VQR9"/>
<dbReference type="KEGG" id="bov:BOV_1105"/>
<dbReference type="HOGENOM" id="CLU_015768_6_3_5"/>
<dbReference type="PhylomeDB" id="A5VQR9"/>
<dbReference type="Proteomes" id="UP000006383">
    <property type="component" value="Chromosome I"/>
</dbReference>
<dbReference type="GO" id="GO:0005829">
    <property type="term" value="C:cytosol"/>
    <property type="evidence" value="ECO:0007669"/>
    <property type="project" value="TreeGrafter"/>
</dbReference>
<dbReference type="GO" id="GO:0005524">
    <property type="term" value="F:ATP binding"/>
    <property type="evidence" value="ECO:0007669"/>
    <property type="project" value="UniProtKB-UniRule"/>
</dbReference>
<dbReference type="GO" id="GO:0004818">
    <property type="term" value="F:glutamate-tRNA ligase activity"/>
    <property type="evidence" value="ECO:0007669"/>
    <property type="project" value="UniProtKB-UniRule"/>
</dbReference>
<dbReference type="GO" id="GO:0000049">
    <property type="term" value="F:tRNA binding"/>
    <property type="evidence" value="ECO:0007669"/>
    <property type="project" value="InterPro"/>
</dbReference>
<dbReference type="GO" id="GO:0008270">
    <property type="term" value="F:zinc ion binding"/>
    <property type="evidence" value="ECO:0007669"/>
    <property type="project" value="InterPro"/>
</dbReference>
<dbReference type="GO" id="GO:0006424">
    <property type="term" value="P:glutamyl-tRNA aminoacylation"/>
    <property type="evidence" value="ECO:0007669"/>
    <property type="project" value="UniProtKB-UniRule"/>
</dbReference>
<dbReference type="CDD" id="cd00808">
    <property type="entry name" value="GluRS_core"/>
    <property type="match status" value="1"/>
</dbReference>
<dbReference type="FunFam" id="3.40.50.620:FF:000007">
    <property type="entry name" value="Glutamate--tRNA ligase"/>
    <property type="match status" value="1"/>
</dbReference>
<dbReference type="Gene3D" id="1.10.10.350">
    <property type="match status" value="1"/>
</dbReference>
<dbReference type="Gene3D" id="3.40.50.620">
    <property type="entry name" value="HUPs"/>
    <property type="match status" value="1"/>
</dbReference>
<dbReference type="HAMAP" id="MF_00022">
    <property type="entry name" value="Glu_tRNA_synth_type1"/>
    <property type="match status" value="1"/>
</dbReference>
<dbReference type="InterPro" id="IPR045462">
    <property type="entry name" value="aa-tRNA-synth_I_cd-bd"/>
</dbReference>
<dbReference type="InterPro" id="IPR020751">
    <property type="entry name" value="aa-tRNA-synth_I_codon-bd_sub2"/>
</dbReference>
<dbReference type="InterPro" id="IPR001412">
    <property type="entry name" value="aa-tRNA-synth_I_CS"/>
</dbReference>
<dbReference type="InterPro" id="IPR008925">
    <property type="entry name" value="aa_tRNA-synth_I_cd-bd_sf"/>
</dbReference>
<dbReference type="InterPro" id="IPR004527">
    <property type="entry name" value="Glu-tRNA-ligase_bac/mito"/>
</dbReference>
<dbReference type="InterPro" id="IPR000924">
    <property type="entry name" value="Glu/Gln-tRNA-synth"/>
</dbReference>
<dbReference type="InterPro" id="IPR020058">
    <property type="entry name" value="Glu/Gln-tRNA-synth_Ib_cat-dom"/>
</dbReference>
<dbReference type="InterPro" id="IPR049940">
    <property type="entry name" value="GluQ/Sye"/>
</dbReference>
<dbReference type="InterPro" id="IPR033910">
    <property type="entry name" value="GluRS_core"/>
</dbReference>
<dbReference type="InterPro" id="IPR014729">
    <property type="entry name" value="Rossmann-like_a/b/a_fold"/>
</dbReference>
<dbReference type="NCBIfam" id="TIGR00464">
    <property type="entry name" value="gltX_bact"/>
    <property type="match status" value="1"/>
</dbReference>
<dbReference type="PANTHER" id="PTHR43311">
    <property type="entry name" value="GLUTAMATE--TRNA LIGASE"/>
    <property type="match status" value="1"/>
</dbReference>
<dbReference type="PANTHER" id="PTHR43311:SF2">
    <property type="entry name" value="GLUTAMATE--TRNA LIGASE, MITOCHONDRIAL-RELATED"/>
    <property type="match status" value="1"/>
</dbReference>
<dbReference type="Pfam" id="PF19269">
    <property type="entry name" value="Anticodon_2"/>
    <property type="match status" value="1"/>
</dbReference>
<dbReference type="Pfam" id="PF00749">
    <property type="entry name" value="tRNA-synt_1c"/>
    <property type="match status" value="1"/>
</dbReference>
<dbReference type="PRINTS" id="PR00987">
    <property type="entry name" value="TRNASYNTHGLU"/>
</dbReference>
<dbReference type="SUPFAM" id="SSF48163">
    <property type="entry name" value="An anticodon-binding domain of class I aminoacyl-tRNA synthetases"/>
    <property type="match status" value="1"/>
</dbReference>
<dbReference type="SUPFAM" id="SSF52374">
    <property type="entry name" value="Nucleotidylyl transferase"/>
    <property type="match status" value="1"/>
</dbReference>
<dbReference type="PROSITE" id="PS00178">
    <property type="entry name" value="AA_TRNA_LIGASE_I"/>
    <property type="match status" value="1"/>
</dbReference>
<proteinExistence type="inferred from homology"/>
<evidence type="ECO:0000255" key="1">
    <source>
        <dbReference type="HAMAP-Rule" id="MF_00022"/>
    </source>
</evidence>
<evidence type="ECO:0000256" key="2">
    <source>
        <dbReference type="SAM" id="MobiDB-lite"/>
    </source>
</evidence>
<accession>A5VQR9</accession>
<name>SYE2_BRUO2</name>